<name>F1P2_PLARH</name>
<proteinExistence type="evidence at protein level"/>
<sequence length="152" mass="17087">MAKLVFISFLVASFCLIGCFGGEAEIKQFWLVRKNAIFQFRFATVEIEKTIYQKVKHILVKAKDDDQKNCIDGVKSEAIIESRAIVKGTVGKILPAIDEVSEALRTGDENKLKAFNNNWNYPEYKVKELANFKLKAAALAPTVQEKLDKCVA</sequence>
<organism>
    <name type="scientific">Platymeris rhadamanthus</name>
    <name type="common">Red spot assassin bug</name>
    <dbReference type="NCBI Taxonomy" id="1134088"/>
    <lineage>
        <taxon>Eukaryota</taxon>
        <taxon>Metazoa</taxon>
        <taxon>Ecdysozoa</taxon>
        <taxon>Arthropoda</taxon>
        <taxon>Hexapoda</taxon>
        <taxon>Insecta</taxon>
        <taxon>Pterygota</taxon>
        <taxon>Neoptera</taxon>
        <taxon>Paraneoptera</taxon>
        <taxon>Hemiptera</taxon>
        <taxon>Heteroptera</taxon>
        <taxon>Panheteroptera</taxon>
        <taxon>Cimicomorpha</taxon>
        <taxon>Reduviidae</taxon>
        <taxon>Platymeris</taxon>
    </lineage>
</organism>
<dbReference type="EMBL" id="MN208280">
    <property type="protein sequence ID" value="QHB21469.1"/>
    <property type="molecule type" value="mRNA"/>
</dbReference>
<dbReference type="SMR" id="A0A6B9L4T1"/>
<dbReference type="GO" id="GO:0005576">
    <property type="term" value="C:extracellular region"/>
    <property type="evidence" value="ECO:0007669"/>
    <property type="project" value="UniProtKB-SubCell"/>
</dbReference>
<reference key="1">
    <citation type="journal article" date="2019" name="Toxins">
        <title>Missiles of mass disruption: composition and glandular origin of venom used as a projectile defensive weapon by the assassin bug Platymeris rhadamanthus.</title>
        <authorList>
            <person name="Walker A.A."/>
            <person name="Robinson S.D."/>
            <person name="Undheim E.A.B."/>
            <person name="Jin J."/>
            <person name="Han X."/>
            <person name="Fry B.G."/>
            <person name="Vetter I."/>
            <person name="King G.F."/>
        </authorList>
    </citation>
    <scope>NUCLEOTIDE SEQUENCE [MRNA]</scope>
    <scope>IDENTIFICATION BY MASS SPECTROMETRY</scope>
    <scope>SUBCELLULAR LOCATION</scope>
    <scope>TISSUE SPECIFICITY</scope>
    <source>
        <tissue>Venom</tissue>
        <tissue>Venom gland</tissue>
    </source>
</reference>
<accession>A0A6B9L4T1</accession>
<comment type="subcellular location">
    <subcellularLocation>
        <location evidence="2">Secreted</location>
    </subcellularLocation>
</comment>
<comment type="tissue specificity">
    <text evidence="2">Expressed by the venom gland (posterior main gland) (at protein level).</text>
</comment>
<comment type="similarity">
    <text evidence="4">Belongs to the insect vpf1 family.</text>
</comment>
<feature type="signal peptide" evidence="1">
    <location>
        <begin position="1"/>
        <end position="21"/>
    </location>
</feature>
<feature type="chain" id="PRO_5025593492" description="Venom protein family 1 protein 2" evidence="4">
    <location>
        <begin position="22"/>
        <end position="152"/>
    </location>
</feature>
<feature type="disulfide bond" evidence="4">
    <location>
        <begin position="70"/>
        <end position="150"/>
    </location>
</feature>
<protein>
    <recommendedName>
        <fullName evidence="3">Venom protein family 1 protein 2</fullName>
        <shortName evidence="3">f1p2</shortName>
    </recommendedName>
</protein>
<evidence type="ECO:0000255" key="1"/>
<evidence type="ECO:0000269" key="2">
    <source>
    </source>
</evidence>
<evidence type="ECO:0000303" key="3">
    <source>
    </source>
</evidence>
<evidence type="ECO:0000305" key="4"/>
<keyword id="KW-1015">Disulfide bond</keyword>
<keyword id="KW-0964">Secreted</keyword>
<keyword id="KW-0732">Signal</keyword>